<reference key="1">
    <citation type="journal article" date="1985" name="J. Bacteriol.">
        <title>Sequence analysis of the spo0B locus reveals a polycistronic transcription unit.</title>
        <authorList>
            <person name="Ferrari F.A."/>
            <person name="Trach K.A."/>
            <person name="Hoch J.A."/>
        </authorList>
    </citation>
    <scope>NUCLEOTIDE SEQUENCE [GENOMIC DNA]</scope>
</reference>
<reference key="2">
    <citation type="journal article" date="1997" name="Nature">
        <title>The complete genome sequence of the Gram-positive bacterium Bacillus subtilis.</title>
        <authorList>
            <person name="Kunst F."/>
            <person name="Ogasawara N."/>
            <person name="Moszer I."/>
            <person name="Albertini A.M."/>
            <person name="Alloni G."/>
            <person name="Azevedo V."/>
            <person name="Bertero M.G."/>
            <person name="Bessieres P."/>
            <person name="Bolotin A."/>
            <person name="Borchert S."/>
            <person name="Borriss R."/>
            <person name="Boursier L."/>
            <person name="Brans A."/>
            <person name="Braun M."/>
            <person name="Brignell S.C."/>
            <person name="Bron S."/>
            <person name="Brouillet S."/>
            <person name="Bruschi C.V."/>
            <person name="Caldwell B."/>
            <person name="Capuano V."/>
            <person name="Carter N.M."/>
            <person name="Choi S.-K."/>
            <person name="Codani J.-J."/>
            <person name="Connerton I.F."/>
            <person name="Cummings N.J."/>
            <person name="Daniel R.A."/>
            <person name="Denizot F."/>
            <person name="Devine K.M."/>
            <person name="Duesterhoeft A."/>
            <person name="Ehrlich S.D."/>
            <person name="Emmerson P.T."/>
            <person name="Entian K.-D."/>
            <person name="Errington J."/>
            <person name="Fabret C."/>
            <person name="Ferrari E."/>
            <person name="Foulger D."/>
            <person name="Fritz C."/>
            <person name="Fujita M."/>
            <person name="Fujita Y."/>
            <person name="Fuma S."/>
            <person name="Galizzi A."/>
            <person name="Galleron N."/>
            <person name="Ghim S.-Y."/>
            <person name="Glaser P."/>
            <person name="Goffeau A."/>
            <person name="Golightly E.J."/>
            <person name="Grandi G."/>
            <person name="Guiseppi G."/>
            <person name="Guy B.J."/>
            <person name="Haga K."/>
            <person name="Haiech J."/>
            <person name="Harwood C.R."/>
            <person name="Henaut A."/>
            <person name="Hilbert H."/>
            <person name="Holsappel S."/>
            <person name="Hosono S."/>
            <person name="Hullo M.-F."/>
            <person name="Itaya M."/>
            <person name="Jones L.-M."/>
            <person name="Joris B."/>
            <person name="Karamata D."/>
            <person name="Kasahara Y."/>
            <person name="Klaerr-Blanchard M."/>
            <person name="Klein C."/>
            <person name="Kobayashi Y."/>
            <person name="Koetter P."/>
            <person name="Koningstein G."/>
            <person name="Krogh S."/>
            <person name="Kumano M."/>
            <person name="Kurita K."/>
            <person name="Lapidus A."/>
            <person name="Lardinois S."/>
            <person name="Lauber J."/>
            <person name="Lazarevic V."/>
            <person name="Lee S.-M."/>
            <person name="Levine A."/>
            <person name="Liu H."/>
            <person name="Masuda S."/>
            <person name="Mauel C."/>
            <person name="Medigue C."/>
            <person name="Medina N."/>
            <person name="Mellado R.P."/>
            <person name="Mizuno M."/>
            <person name="Moestl D."/>
            <person name="Nakai S."/>
            <person name="Noback M."/>
            <person name="Noone D."/>
            <person name="O'Reilly M."/>
            <person name="Ogawa K."/>
            <person name="Ogiwara A."/>
            <person name="Oudega B."/>
            <person name="Park S.-H."/>
            <person name="Parro V."/>
            <person name="Pohl T.M."/>
            <person name="Portetelle D."/>
            <person name="Porwollik S."/>
            <person name="Prescott A.M."/>
            <person name="Presecan E."/>
            <person name="Pujic P."/>
            <person name="Purnelle B."/>
            <person name="Rapoport G."/>
            <person name="Rey M."/>
            <person name="Reynolds S."/>
            <person name="Rieger M."/>
            <person name="Rivolta C."/>
            <person name="Rocha E."/>
            <person name="Roche B."/>
            <person name="Rose M."/>
            <person name="Sadaie Y."/>
            <person name="Sato T."/>
            <person name="Scanlan E."/>
            <person name="Schleich S."/>
            <person name="Schroeter R."/>
            <person name="Scoffone F."/>
            <person name="Sekiguchi J."/>
            <person name="Sekowska A."/>
            <person name="Seror S.J."/>
            <person name="Serror P."/>
            <person name="Shin B.-S."/>
            <person name="Soldo B."/>
            <person name="Sorokin A."/>
            <person name="Tacconi E."/>
            <person name="Takagi T."/>
            <person name="Takahashi H."/>
            <person name="Takemaru K."/>
            <person name="Takeuchi M."/>
            <person name="Tamakoshi A."/>
            <person name="Tanaka T."/>
            <person name="Terpstra P."/>
            <person name="Tognoni A."/>
            <person name="Tosato V."/>
            <person name="Uchiyama S."/>
            <person name="Vandenbol M."/>
            <person name="Vannier F."/>
            <person name="Vassarotti A."/>
            <person name="Viari A."/>
            <person name="Wambutt R."/>
            <person name="Wedler E."/>
            <person name="Wedler H."/>
            <person name="Weitzenegger T."/>
            <person name="Winters P."/>
            <person name="Wipat A."/>
            <person name="Yamamoto H."/>
            <person name="Yamane K."/>
            <person name="Yasumoto K."/>
            <person name="Yata K."/>
            <person name="Yoshida K."/>
            <person name="Yoshikawa H.-F."/>
            <person name="Zumstein E."/>
            <person name="Yoshikawa H."/>
            <person name="Danchin A."/>
        </authorList>
    </citation>
    <scope>NUCLEOTIDE SEQUENCE [LARGE SCALE GENOMIC DNA]</scope>
    <source>
        <strain>168</strain>
    </source>
</reference>
<reference key="3">
    <citation type="journal article" date="1991" name="J. Mol. Biol.">
        <title>Sporulation operon spoIVF and the characterization of mutations that uncouple mother-cell from forespore gene expression in Bacillus subtilis.</title>
        <authorList>
            <person name="Cutting S.M."/>
            <person name="Roels S."/>
            <person name="Losick R."/>
        </authorList>
    </citation>
    <scope>NUCLEOTIDE SEQUENCE [GENOMIC DNA] OF 1-26</scope>
    <source>
        <strain>168</strain>
    </source>
</reference>
<reference key="4">
    <citation type="journal article" date="2003" name="Biosci. Biotechnol. Biochem.">
        <title>Expression profiling of translation-associated genes in sporulating Bacillus subtilis and consequence of sporulation by gene inactivation.</title>
        <authorList>
            <person name="Ohashi Y."/>
            <person name="Inaoka T."/>
            <person name="Kasai K."/>
            <person name="Ito Y."/>
            <person name="Okamoto S."/>
            <person name="Satsu H."/>
            <person name="Tozawa Y."/>
            <person name="Kawamura F."/>
            <person name="Ochi K."/>
        </authorList>
    </citation>
    <scope>DISRUPTION PHENOTYPE</scope>
    <scope>ROLE IN SPORULATION</scope>
    <source>
        <strain>168</strain>
    </source>
</reference>
<reference evidence="5 6" key="5">
    <citation type="journal article" date="2018" name="Proc. Natl. Acad. Sci. U.S.A.">
        <title>Structural basis for antibiotic resistance mediated by the Bacillus subtilis ABCF ATPase VmlR.</title>
        <authorList>
            <person name="Crowe-McAuliffe C."/>
            <person name="Graf M."/>
            <person name="Huter P."/>
            <person name="Takada H."/>
            <person name="Abdelshahid M."/>
            <person name="Novacek J."/>
            <person name="Murina V."/>
            <person name="Atkinson G.C."/>
            <person name="Hauryliuk V."/>
            <person name="Wilson D.N."/>
        </authorList>
    </citation>
    <scope>STRUCTURE BY ELECTRON MICROSCOPY (3.10 ANGSTROMS) OF 1-94 WITH AND WITHOUT VIRGINIAMYCIN M</scope>
    <scope>SUBUNIT</scope>
</reference>
<comment type="function">
    <text evidence="2">Plays a role in sporulation at high temperatures.</text>
</comment>
<comment type="subunit">
    <text evidence="3">Part of the 50S ribosomal subunit.</text>
</comment>
<comment type="PTM">
    <text evidence="1">The N-terminus is cleaved by ribosomal processing cysteine protease Prp.</text>
</comment>
<comment type="disruption phenotype">
    <text evidence="2">No effect on sporulation at 37 degrees Celsius, however sporulation decreases at 47 degrees Celsius.</text>
</comment>
<comment type="similarity">
    <text evidence="4">Belongs to the bacterial ribosomal protein bL27 family.</text>
</comment>
<evidence type="ECO:0000250" key="1">
    <source>
        <dbReference type="UniProtKB" id="Q2FXT0"/>
    </source>
</evidence>
<evidence type="ECO:0000269" key="2">
    <source>
    </source>
</evidence>
<evidence type="ECO:0000269" key="3">
    <source>
    </source>
</evidence>
<evidence type="ECO:0000305" key="4"/>
<evidence type="ECO:0007744" key="5">
    <source>
        <dbReference type="PDB" id="6HA1"/>
    </source>
</evidence>
<evidence type="ECO:0007744" key="6">
    <source>
        <dbReference type="PDB" id="6HA8"/>
    </source>
</evidence>
<evidence type="ECO:0007829" key="7">
    <source>
        <dbReference type="PDB" id="7S9U"/>
    </source>
</evidence>
<evidence type="ECO:0007829" key="8">
    <source>
        <dbReference type="PDB" id="8S1P"/>
    </source>
</evidence>
<evidence type="ECO:0007829" key="9">
    <source>
        <dbReference type="PDB" id="9BSS"/>
    </source>
</evidence>
<gene>
    <name type="primary">rpmA</name>
    <name type="ordered locus">BSU27940</name>
</gene>
<organism>
    <name type="scientific">Bacillus subtilis (strain 168)</name>
    <dbReference type="NCBI Taxonomy" id="224308"/>
    <lineage>
        <taxon>Bacteria</taxon>
        <taxon>Bacillati</taxon>
        <taxon>Bacillota</taxon>
        <taxon>Bacilli</taxon>
        <taxon>Bacillales</taxon>
        <taxon>Bacillaceae</taxon>
        <taxon>Bacillus</taxon>
    </lineage>
</organism>
<accession>P05657</accession>
<sequence>MLRLDLQFFASKKGVGSTKNGRDSEAKRLGAKRADGQFVTGGSILYRQRGTKIYPGENVGRGGDDTLFAKIDGTVKFERFGRDRKKVSVYPVAQ</sequence>
<dbReference type="EMBL" id="X02656">
    <property type="protein sequence ID" value="CAA26492.1"/>
    <property type="molecule type" value="Genomic_DNA"/>
</dbReference>
<dbReference type="EMBL" id="AL009126">
    <property type="protein sequence ID" value="CAB14754.1"/>
    <property type="molecule type" value="Genomic_DNA"/>
</dbReference>
<dbReference type="EMBL" id="X59528">
    <property type="protein sequence ID" value="CAA42110.1"/>
    <property type="molecule type" value="Genomic_DNA"/>
</dbReference>
<dbReference type="PIR" id="C21895">
    <property type="entry name" value="C21895"/>
</dbReference>
<dbReference type="RefSeq" id="NP_390672.1">
    <property type="nucleotide sequence ID" value="NC_000964.3"/>
</dbReference>
<dbReference type="RefSeq" id="WP_003222623.1">
    <property type="nucleotide sequence ID" value="NZ_OZ025638.1"/>
</dbReference>
<dbReference type="PDB" id="3J9W">
    <property type="method" value="EM"/>
    <property type="resolution" value="3.90 A"/>
    <property type="chains" value="BZ=1-94"/>
</dbReference>
<dbReference type="PDB" id="5NJT">
    <property type="method" value="EM"/>
    <property type="resolution" value="3.80 A"/>
    <property type="chains" value="o=11-92"/>
</dbReference>
<dbReference type="PDB" id="6HA1">
    <property type="method" value="EM"/>
    <property type="resolution" value="3.10 A"/>
    <property type="chains" value="W=1-94"/>
</dbReference>
<dbReference type="PDB" id="6HA8">
    <property type="method" value="EM"/>
    <property type="resolution" value="3.50 A"/>
    <property type="chains" value="W=1-94"/>
</dbReference>
<dbReference type="PDB" id="6HTQ">
    <property type="method" value="EM"/>
    <property type="resolution" value="4.50 A"/>
    <property type="chains" value="V=11-92"/>
</dbReference>
<dbReference type="PDB" id="6PPF">
    <property type="method" value="EM"/>
    <property type="resolution" value="3.40 A"/>
    <property type="chains" value="V=1-94"/>
</dbReference>
<dbReference type="PDB" id="6PPK">
    <property type="method" value="EM"/>
    <property type="resolution" value="4.40 A"/>
    <property type="chains" value="V=1-94"/>
</dbReference>
<dbReference type="PDB" id="6TNN">
    <property type="method" value="EM"/>
    <property type="resolution" value="3.07 A"/>
    <property type="chains" value="o=1-94"/>
</dbReference>
<dbReference type="PDB" id="6TPQ">
    <property type="method" value="EM"/>
    <property type="resolution" value="3.07 A"/>
    <property type="chains" value="o=1-94"/>
</dbReference>
<dbReference type="PDB" id="7AQC">
    <property type="method" value="EM"/>
    <property type="resolution" value="2.99 A"/>
    <property type="chains" value="V=1-94"/>
</dbReference>
<dbReference type="PDB" id="7AQD">
    <property type="method" value="EM"/>
    <property type="resolution" value="3.10 A"/>
    <property type="chains" value="V=1-94"/>
</dbReference>
<dbReference type="PDB" id="7AS8">
    <property type="method" value="EM"/>
    <property type="resolution" value="2.90 A"/>
    <property type="chains" value="a=1-94"/>
</dbReference>
<dbReference type="PDB" id="7AS9">
    <property type="method" value="EM"/>
    <property type="resolution" value="3.50 A"/>
    <property type="chains" value="a=1-94"/>
</dbReference>
<dbReference type="PDB" id="7O5B">
    <property type="method" value="EM"/>
    <property type="resolution" value="3.33 A"/>
    <property type="chains" value="u=1-94"/>
</dbReference>
<dbReference type="PDB" id="7OPE">
    <property type="method" value="EM"/>
    <property type="resolution" value="3.20 A"/>
    <property type="chains" value="a=1-94"/>
</dbReference>
<dbReference type="PDB" id="7QGU">
    <property type="method" value="EM"/>
    <property type="resolution" value="4.75 A"/>
    <property type="chains" value="V=1-94"/>
</dbReference>
<dbReference type="PDB" id="7QH4">
    <property type="method" value="EM"/>
    <property type="resolution" value="5.45 A"/>
    <property type="chains" value="V=1-94"/>
</dbReference>
<dbReference type="PDB" id="7QV1">
    <property type="method" value="EM"/>
    <property type="resolution" value="3.50 A"/>
    <property type="chains" value="W=1-94"/>
</dbReference>
<dbReference type="PDB" id="7QV2">
    <property type="method" value="EM"/>
    <property type="resolution" value="3.50 A"/>
    <property type="chains" value="W=1-94"/>
</dbReference>
<dbReference type="PDB" id="7QV3">
    <property type="method" value="EM"/>
    <property type="resolution" value="5.14 A"/>
    <property type="chains" value="W=1-94"/>
</dbReference>
<dbReference type="PDB" id="7S9U">
    <property type="method" value="EM"/>
    <property type="resolution" value="3.20 A"/>
    <property type="chains" value="V=1-94"/>
</dbReference>
<dbReference type="PDB" id="7SAE">
    <property type="method" value="EM"/>
    <property type="resolution" value="3.00 A"/>
    <property type="chains" value="V=1-94"/>
</dbReference>
<dbReference type="PDB" id="8BUU">
    <property type="method" value="EM"/>
    <property type="resolution" value="2.90 A"/>
    <property type="chains" value="W=1-94"/>
</dbReference>
<dbReference type="PDB" id="8QCQ">
    <property type="method" value="EM"/>
    <property type="resolution" value="2.30 A"/>
    <property type="chains" value="W=1-94"/>
</dbReference>
<dbReference type="PDB" id="8QPP">
    <property type="method" value="EM"/>
    <property type="resolution" value="3.40 A"/>
    <property type="chains" value="u=11-92"/>
</dbReference>
<dbReference type="PDB" id="8R55">
    <property type="method" value="EM"/>
    <property type="resolution" value="3.57 A"/>
    <property type="chains" value="u=11-92"/>
</dbReference>
<dbReference type="PDB" id="8S1P">
    <property type="method" value="EM"/>
    <property type="resolution" value="1.96 A"/>
    <property type="chains" value="W=1-94"/>
</dbReference>
<dbReference type="PDB" id="8S1U">
    <property type="method" value="EM"/>
    <property type="resolution" value="3.40 A"/>
    <property type="chains" value="W=1-94"/>
</dbReference>
<dbReference type="PDB" id="9BS0">
    <property type="method" value="EM"/>
    <property type="resolution" value="3.30 A"/>
    <property type="chains" value="Q=1-94"/>
</dbReference>
<dbReference type="PDB" id="9BSS">
    <property type="method" value="EM"/>
    <property type="resolution" value="3.10 A"/>
    <property type="chains" value="Q=1-94"/>
</dbReference>
<dbReference type="PDBsum" id="3J9W"/>
<dbReference type="PDBsum" id="5NJT"/>
<dbReference type="PDBsum" id="6HA1"/>
<dbReference type="PDBsum" id="6HA8"/>
<dbReference type="PDBsum" id="6HTQ"/>
<dbReference type="PDBsum" id="6PPF"/>
<dbReference type="PDBsum" id="6PPK"/>
<dbReference type="PDBsum" id="6TNN"/>
<dbReference type="PDBsum" id="6TPQ"/>
<dbReference type="PDBsum" id="7AQC"/>
<dbReference type="PDBsum" id="7AQD"/>
<dbReference type="PDBsum" id="7AS8"/>
<dbReference type="PDBsum" id="7AS9"/>
<dbReference type="PDBsum" id="7O5B"/>
<dbReference type="PDBsum" id="7OPE"/>
<dbReference type="PDBsum" id="7QGU"/>
<dbReference type="PDBsum" id="7QH4"/>
<dbReference type="PDBsum" id="7QV1"/>
<dbReference type="PDBsum" id="7QV2"/>
<dbReference type="PDBsum" id="7QV3"/>
<dbReference type="PDBsum" id="7S9U"/>
<dbReference type="PDBsum" id="7SAE"/>
<dbReference type="PDBsum" id="8BUU"/>
<dbReference type="PDBsum" id="8QCQ"/>
<dbReference type="PDBsum" id="8QPP"/>
<dbReference type="PDBsum" id="8R55"/>
<dbReference type="PDBsum" id="8S1P"/>
<dbReference type="PDBsum" id="8S1U"/>
<dbReference type="PDBsum" id="9BS0"/>
<dbReference type="PDBsum" id="9BSS"/>
<dbReference type="EMDB" id="EMD-0176"/>
<dbReference type="EMDB" id="EMD-0177"/>
<dbReference type="EMDB" id="EMD-0270"/>
<dbReference type="EMDB" id="EMD-10535"/>
<dbReference type="EMDB" id="EMD-10543"/>
<dbReference type="EMDB" id="EMD-11862"/>
<dbReference type="EMDB" id="EMD-11864"/>
<dbReference type="EMDB" id="EMD-11889"/>
<dbReference type="EMDB" id="EMD-11890"/>
<dbReference type="EMDB" id="EMD-12734"/>
<dbReference type="EMDB" id="EMD-13017"/>
<dbReference type="EMDB" id="EMD-14157"/>
<dbReference type="EMDB" id="EMD-14158"/>
<dbReference type="EMDB" id="EMD-14159"/>
<dbReference type="EMDB" id="EMD-16246"/>
<dbReference type="EMDB" id="EMD-18332"/>
<dbReference type="EMDB" id="EMD-19638"/>
<dbReference type="EMDB" id="EMD-19641"/>
<dbReference type="EMDB" id="EMD-3656"/>
<dbReference type="EMDB" id="EMD-44849"/>
<dbReference type="EMDB" id="EMD-44871"/>
<dbReference type="SMR" id="P05657"/>
<dbReference type="FunCoup" id="P05657">
    <property type="interactions" value="487"/>
</dbReference>
<dbReference type="IntAct" id="P05657">
    <property type="interactions" value="1"/>
</dbReference>
<dbReference type="STRING" id="224308.BSU27940"/>
<dbReference type="jPOST" id="P05657"/>
<dbReference type="PaxDb" id="224308-BSU27940"/>
<dbReference type="EnsemblBacteria" id="CAB14754">
    <property type="protein sequence ID" value="CAB14754"/>
    <property type="gene ID" value="BSU_27940"/>
</dbReference>
<dbReference type="GeneID" id="86872694"/>
<dbReference type="GeneID" id="937511"/>
<dbReference type="KEGG" id="bsu:BSU27940"/>
<dbReference type="PATRIC" id="fig|224308.179.peg.3036"/>
<dbReference type="eggNOG" id="COG0211">
    <property type="taxonomic scope" value="Bacteria"/>
</dbReference>
<dbReference type="InParanoid" id="P05657"/>
<dbReference type="OrthoDB" id="9803474at2"/>
<dbReference type="PhylomeDB" id="P05657"/>
<dbReference type="BioCyc" id="BSUB:BSU27940-MONOMER"/>
<dbReference type="PRO" id="PR:P05657"/>
<dbReference type="Proteomes" id="UP000001570">
    <property type="component" value="Chromosome"/>
</dbReference>
<dbReference type="GO" id="GO:0022625">
    <property type="term" value="C:cytosolic large ribosomal subunit"/>
    <property type="evidence" value="ECO:0000318"/>
    <property type="project" value="GO_Central"/>
</dbReference>
<dbReference type="GO" id="GO:0003735">
    <property type="term" value="F:structural constituent of ribosome"/>
    <property type="evidence" value="ECO:0000318"/>
    <property type="project" value="GO_Central"/>
</dbReference>
<dbReference type="GO" id="GO:0006412">
    <property type="term" value="P:translation"/>
    <property type="evidence" value="ECO:0007669"/>
    <property type="project" value="UniProtKB-UniRule"/>
</dbReference>
<dbReference type="FunFam" id="2.40.50.100:FF:000004">
    <property type="entry name" value="50S ribosomal protein L27"/>
    <property type="match status" value="1"/>
</dbReference>
<dbReference type="Gene3D" id="2.40.50.100">
    <property type="match status" value="1"/>
</dbReference>
<dbReference type="HAMAP" id="MF_00539">
    <property type="entry name" value="Ribosomal_bL27"/>
    <property type="match status" value="1"/>
</dbReference>
<dbReference type="InterPro" id="IPR001684">
    <property type="entry name" value="Ribosomal_bL27"/>
</dbReference>
<dbReference type="InterPro" id="IPR018261">
    <property type="entry name" value="Ribosomal_bL27_CS"/>
</dbReference>
<dbReference type="NCBIfam" id="TIGR00062">
    <property type="entry name" value="L27"/>
    <property type="match status" value="1"/>
</dbReference>
<dbReference type="PANTHER" id="PTHR15893:SF0">
    <property type="entry name" value="LARGE RIBOSOMAL SUBUNIT PROTEIN BL27M"/>
    <property type="match status" value="1"/>
</dbReference>
<dbReference type="PANTHER" id="PTHR15893">
    <property type="entry name" value="RIBOSOMAL PROTEIN L27"/>
    <property type="match status" value="1"/>
</dbReference>
<dbReference type="Pfam" id="PF01016">
    <property type="entry name" value="Ribosomal_L27"/>
    <property type="match status" value="1"/>
</dbReference>
<dbReference type="PRINTS" id="PR00063">
    <property type="entry name" value="RIBOSOMALL27"/>
</dbReference>
<dbReference type="SUPFAM" id="SSF110324">
    <property type="entry name" value="Ribosomal L27 protein-like"/>
    <property type="match status" value="1"/>
</dbReference>
<dbReference type="PROSITE" id="PS00831">
    <property type="entry name" value="RIBOSOMAL_L27"/>
    <property type="match status" value="1"/>
</dbReference>
<keyword id="KW-0002">3D-structure</keyword>
<keyword id="KW-1185">Reference proteome</keyword>
<keyword id="KW-0687">Ribonucleoprotein</keyword>
<keyword id="KW-0689">Ribosomal protein</keyword>
<protein>
    <recommendedName>
        <fullName evidence="4">Large ribosomal subunit protein bL27</fullName>
    </recommendedName>
    <alternativeName>
        <fullName>50S ribosomal protein L27</fullName>
    </alternativeName>
    <alternativeName>
        <fullName>BL24</fullName>
    </alternativeName>
    <alternativeName>
        <fullName>BL30</fullName>
    </alternativeName>
</protein>
<feature type="propeptide" id="PRO_0000459864" evidence="1 4">
    <location>
        <begin position="1"/>
        <end position="9"/>
    </location>
</feature>
<feature type="chain" id="PRO_0000181044" description="Large ribosomal subunit protein bL27">
    <location>
        <begin position="10"/>
        <end position="94"/>
    </location>
</feature>
<feature type="strand" evidence="8">
    <location>
        <begin position="30"/>
        <end position="33"/>
    </location>
</feature>
<feature type="strand" evidence="7">
    <location>
        <begin position="37"/>
        <end position="39"/>
    </location>
</feature>
<feature type="strand" evidence="8">
    <location>
        <begin position="44"/>
        <end position="47"/>
    </location>
</feature>
<feature type="strand" evidence="8">
    <location>
        <begin position="52"/>
        <end position="55"/>
    </location>
</feature>
<feature type="strand" evidence="8">
    <location>
        <begin position="59"/>
        <end position="61"/>
    </location>
</feature>
<feature type="turn" evidence="9">
    <location>
        <begin position="63"/>
        <end position="65"/>
    </location>
</feature>
<feature type="strand" evidence="8">
    <location>
        <begin position="67"/>
        <end position="80"/>
    </location>
</feature>
<feature type="turn" evidence="8">
    <location>
        <begin position="81"/>
        <end position="83"/>
    </location>
</feature>
<feature type="strand" evidence="8">
    <location>
        <begin position="84"/>
        <end position="90"/>
    </location>
</feature>
<proteinExistence type="evidence at protein level"/>
<name>RL27_BACSU</name>